<reference key="1">
    <citation type="journal article" date="2009" name="J. Bacteriol.">
        <title>Genomic sequencing reveals regulatory mutations and recombinational events in the widely used MC4100 lineage of Escherichia coli K-12.</title>
        <authorList>
            <person name="Ferenci T."/>
            <person name="Zhou Z."/>
            <person name="Betteridge T."/>
            <person name="Ren Y."/>
            <person name="Liu Y."/>
            <person name="Feng L."/>
            <person name="Reeves P.R."/>
            <person name="Wang L."/>
        </authorList>
    </citation>
    <scope>NUCLEOTIDE SEQUENCE [LARGE SCALE GENOMIC DNA]</scope>
    <source>
        <strain>K12 / MC4100 / BW2952</strain>
    </source>
</reference>
<feature type="chain" id="PRO_1000212539" description="Co-chaperone protein HscB">
    <location>
        <begin position="1"/>
        <end position="171"/>
    </location>
</feature>
<feature type="domain" description="J" evidence="1">
    <location>
        <begin position="2"/>
        <end position="74"/>
    </location>
</feature>
<keyword id="KW-0143">Chaperone</keyword>
<protein>
    <recommendedName>
        <fullName evidence="1">Co-chaperone protein HscB</fullName>
    </recommendedName>
    <alternativeName>
        <fullName evidence="1">Hsc20</fullName>
    </alternativeName>
</protein>
<name>HSCB_ECOBW</name>
<evidence type="ECO:0000255" key="1">
    <source>
        <dbReference type="HAMAP-Rule" id="MF_00682"/>
    </source>
</evidence>
<proteinExistence type="inferred from homology"/>
<gene>
    <name evidence="1" type="primary">hscB</name>
    <name type="ordered locus">BWG_2291</name>
</gene>
<sequence length="171" mass="20138">MDYFTLFGLPARYQLDTQALSLRFQDLQRQYHPDKFASGSQAEQLAAVQQSATINQAWQTLRHPLMRAEYLLSLHGFDLASEQHTVRDTAFLMEQLELREELDEIEQAKDEARLESFIKRVKKMFDTRHQLMVEQLDNETWDAAADTVRKLRFLDKLRSSAEQLEEKLLDF</sequence>
<dbReference type="EMBL" id="CP001396">
    <property type="protein sequence ID" value="ACR62997.1"/>
    <property type="molecule type" value="Genomic_DNA"/>
</dbReference>
<dbReference type="RefSeq" id="WP_000384413.1">
    <property type="nucleotide sequence ID" value="NC_012759.1"/>
</dbReference>
<dbReference type="SMR" id="C4ZXA2"/>
<dbReference type="GeneID" id="75172640"/>
<dbReference type="KEGG" id="ebw:BWG_2291"/>
<dbReference type="HOGENOM" id="CLU_068529_2_0_6"/>
<dbReference type="GO" id="GO:1990230">
    <property type="term" value="C:iron-sulfur cluster transfer complex"/>
    <property type="evidence" value="ECO:0007669"/>
    <property type="project" value="TreeGrafter"/>
</dbReference>
<dbReference type="GO" id="GO:0001671">
    <property type="term" value="F:ATPase activator activity"/>
    <property type="evidence" value="ECO:0007669"/>
    <property type="project" value="InterPro"/>
</dbReference>
<dbReference type="GO" id="GO:0051087">
    <property type="term" value="F:protein-folding chaperone binding"/>
    <property type="evidence" value="ECO:0007669"/>
    <property type="project" value="InterPro"/>
</dbReference>
<dbReference type="GO" id="GO:0044571">
    <property type="term" value="P:[2Fe-2S] cluster assembly"/>
    <property type="evidence" value="ECO:0007669"/>
    <property type="project" value="InterPro"/>
</dbReference>
<dbReference type="GO" id="GO:0051259">
    <property type="term" value="P:protein complex oligomerization"/>
    <property type="evidence" value="ECO:0007669"/>
    <property type="project" value="InterPro"/>
</dbReference>
<dbReference type="GO" id="GO:0006457">
    <property type="term" value="P:protein folding"/>
    <property type="evidence" value="ECO:0007669"/>
    <property type="project" value="UniProtKB-UniRule"/>
</dbReference>
<dbReference type="CDD" id="cd06257">
    <property type="entry name" value="DnaJ"/>
    <property type="match status" value="1"/>
</dbReference>
<dbReference type="FunFam" id="1.10.287.110:FF:000008">
    <property type="entry name" value="Co-chaperone protein HscB"/>
    <property type="match status" value="1"/>
</dbReference>
<dbReference type="FunFam" id="1.20.1280.20:FF:000001">
    <property type="entry name" value="Co-chaperone protein HscB"/>
    <property type="match status" value="1"/>
</dbReference>
<dbReference type="Gene3D" id="1.10.287.110">
    <property type="entry name" value="DnaJ domain"/>
    <property type="match status" value="1"/>
</dbReference>
<dbReference type="Gene3D" id="1.20.1280.20">
    <property type="entry name" value="HscB, C-terminal domain"/>
    <property type="match status" value="1"/>
</dbReference>
<dbReference type="HAMAP" id="MF_00682">
    <property type="entry name" value="HscB"/>
    <property type="match status" value="1"/>
</dbReference>
<dbReference type="InterPro" id="IPR001623">
    <property type="entry name" value="DnaJ_domain"/>
</dbReference>
<dbReference type="InterPro" id="IPR004640">
    <property type="entry name" value="HscB"/>
</dbReference>
<dbReference type="InterPro" id="IPR036386">
    <property type="entry name" value="HscB_C_sf"/>
</dbReference>
<dbReference type="InterPro" id="IPR009073">
    <property type="entry name" value="HscB_oligo_C"/>
</dbReference>
<dbReference type="InterPro" id="IPR036869">
    <property type="entry name" value="J_dom_sf"/>
</dbReference>
<dbReference type="NCBIfam" id="TIGR00714">
    <property type="entry name" value="hscB"/>
    <property type="match status" value="1"/>
</dbReference>
<dbReference type="NCBIfam" id="NF003449">
    <property type="entry name" value="PRK05014.1"/>
    <property type="match status" value="1"/>
</dbReference>
<dbReference type="PANTHER" id="PTHR14021">
    <property type="entry name" value="IRON-SULFUR CLUSTER CO-CHAPERONE PROTEIN HSCB"/>
    <property type="match status" value="1"/>
</dbReference>
<dbReference type="PANTHER" id="PTHR14021:SF15">
    <property type="entry name" value="IRON-SULFUR CLUSTER CO-CHAPERONE PROTEIN HSCB"/>
    <property type="match status" value="1"/>
</dbReference>
<dbReference type="Pfam" id="PF07743">
    <property type="entry name" value="HSCB_C"/>
    <property type="match status" value="1"/>
</dbReference>
<dbReference type="SMART" id="SM00271">
    <property type="entry name" value="DnaJ"/>
    <property type="match status" value="1"/>
</dbReference>
<dbReference type="SUPFAM" id="SSF46565">
    <property type="entry name" value="Chaperone J-domain"/>
    <property type="match status" value="1"/>
</dbReference>
<dbReference type="SUPFAM" id="SSF47144">
    <property type="entry name" value="HSC20 (HSCB), C-terminal oligomerisation domain"/>
    <property type="match status" value="1"/>
</dbReference>
<dbReference type="PROSITE" id="PS50076">
    <property type="entry name" value="DNAJ_2"/>
    <property type="match status" value="1"/>
</dbReference>
<organism>
    <name type="scientific">Escherichia coli (strain K12 / MC4100 / BW2952)</name>
    <dbReference type="NCBI Taxonomy" id="595496"/>
    <lineage>
        <taxon>Bacteria</taxon>
        <taxon>Pseudomonadati</taxon>
        <taxon>Pseudomonadota</taxon>
        <taxon>Gammaproteobacteria</taxon>
        <taxon>Enterobacterales</taxon>
        <taxon>Enterobacteriaceae</taxon>
        <taxon>Escherichia</taxon>
    </lineage>
</organism>
<accession>C4ZXA2</accession>
<comment type="function">
    <text evidence="1">Co-chaperone involved in the maturation of iron-sulfur cluster-containing proteins. Seems to help targeting proteins to be folded toward HscA.</text>
</comment>
<comment type="subunit">
    <text evidence="1">Interacts with HscA and stimulates its ATPase activity. Interacts with IscU.</text>
</comment>
<comment type="similarity">
    <text evidence="1">Belongs to the HscB family.</text>
</comment>